<organism>
    <name type="scientific">Aotus nancymaae</name>
    <name type="common">Ma's night monkey</name>
    <dbReference type="NCBI Taxonomy" id="37293"/>
    <lineage>
        <taxon>Eukaryota</taxon>
        <taxon>Metazoa</taxon>
        <taxon>Chordata</taxon>
        <taxon>Craniata</taxon>
        <taxon>Vertebrata</taxon>
        <taxon>Euteleostomi</taxon>
        <taxon>Mammalia</taxon>
        <taxon>Eutheria</taxon>
        <taxon>Euarchontoglires</taxon>
        <taxon>Primates</taxon>
        <taxon>Haplorrhini</taxon>
        <taxon>Platyrrhini</taxon>
        <taxon>Aotidae</taxon>
        <taxon>Aotus</taxon>
    </lineage>
</organism>
<accession>A4K2W5</accession>
<feature type="chain" id="PRO_0000289631" description="Serine/threonine-protein kinase 4">
    <location>
        <begin position="1"/>
        <end position="487"/>
    </location>
</feature>
<feature type="chain" id="PRO_0000413727" description="Serine/threonine-protein kinase 4 37kDa subunit" evidence="1">
    <location>
        <begin position="1"/>
        <end position="326"/>
    </location>
</feature>
<feature type="chain" id="PRO_0000413728" description="Serine/threonine-protein kinase 4 18kDa subunit" evidence="1">
    <location>
        <begin position="327"/>
        <end position="487"/>
    </location>
</feature>
<feature type="domain" description="Protein kinase" evidence="5">
    <location>
        <begin position="30"/>
        <end position="281"/>
    </location>
</feature>
<feature type="domain" description="SARAH" evidence="6">
    <location>
        <begin position="433"/>
        <end position="480"/>
    </location>
</feature>
<feature type="region of interest" description="Disordered" evidence="7">
    <location>
        <begin position="303"/>
        <end position="332"/>
    </location>
</feature>
<feature type="coiled-coil region" evidence="4">
    <location>
        <begin position="290"/>
        <end position="310"/>
    </location>
</feature>
<feature type="compositionally biased region" description="Basic and acidic residues" evidence="7">
    <location>
        <begin position="303"/>
        <end position="312"/>
    </location>
</feature>
<feature type="compositionally biased region" description="Acidic residues" evidence="7">
    <location>
        <begin position="313"/>
        <end position="326"/>
    </location>
</feature>
<feature type="active site" description="Proton acceptor" evidence="5">
    <location>
        <position position="149"/>
    </location>
</feature>
<feature type="binding site" evidence="5">
    <location>
        <begin position="36"/>
        <end position="44"/>
    </location>
    <ligand>
        <name>ATP</name>
        <dbReference type="ChEBI" id="CHEBI:30616"/>
    </ligand>
</feature>
<feature type="binding site" evidence="5">
    <location>
        <position position="59"/>
    </location>
    <ligand>
        <name>ATP</name>
        <dbReference type="ChEBI" id="CHEBI:30616"/>
    </ligand>
</feature>
<feature type="site" description="Cleavage; by caspase-3" evidence="1">
    <location>
        <begin position="326"/>
        <end position="327"/>
    </location>
</feature>
<feature type="site" description="Cleavage; by caspase-3" evidence="1">
    <location>
        <begin position="349"/>
        <end position="350"/>
    </location>
</feature>
<feature type="modified residue" description="N-acetylmethionine" evidence="2">
    <location>
        <position position="1"/>
    </location>
</feature>
<feature type="modified residue" description="Phosphothreonine" evidence="2">
    <location>
        <position position="3"/>
    </location>
</feature>
<feature type="modified residue" description="Phosphothreonine; by autocatalysis" evidence="2">
    <location>
        <position position="183"/>
    </location>
</feature>
<feature type="modified residue" description="Phosphoserine" evidence="2">
    <location>
        <position position="265"/>
    </location>
</feature>
<feature type="modified residue" description="Phosphoserine" evidence="2">
    <location>
        <position position="320"/>
    </location>
</feature>
<feature type="modified residue" description="Phosphothreonine" evidence="2">
    <location>
        <position position="340"/>
    </location>
</feature>
<feature type="modified residue" description="Phosphothreonine" evidence="2">
    <location>
        <position position="367"/>
    </location>
</feature>
<feature type="modified residue" description="Phosphothreonine; by PKB/AKT1" evidence="2">
    <location>
        <position position="387"/>
    </location>
</feature>
<feature type="modified residue" description="Phosphoserine" evidence="2">
    <location>
        <position position="410"/>
    </location>
</feature>
<feature type="modified residue" description="Phosphoserine" evidence="2">
    <location>
        <position position="414"/>
    </location>
</feature>
<feature type="modified residue" description="Phosphotyrosine" evidence="3">
    <location>
        <position position="433"/>
    </location>
</feature>
<protein>
    <recommendedName>
        <fullName>Serine/threonine-protein kinase 4</fullName>
        <ecNumber>2.7.11.1</ecNumber>
    </recommendedName>
    <component>
        <recommendedName>
            <fullName>Serine/threonine-protein kinase 4 37kDa subunit</fullName>
            <shortName>MST1/N</shortName>
        </recommendedName>
    </component>
    <component>
        <recommendedName>
            <fullName>Serine/threonine-protein kinase 4 18kDa subunit</fullName>
            <shortName>MST1/C</shortName>
        </recommendedName>
    </component>
</protein>
<dbReference type="EC" id="2.7.11.1"/>
<dbReference type="EMBL" id="DP000046">
    <property type="protein sequence ID" value="ABO53000.1"/>
    <property type="molecule type" value="Genomic_DNA"/>
</dbReference>
<dbReference type="SMR" id="A4K2W5"/>
<dbReference type="STRING" id="37293.ENSANAP00000013457"/>
<dbReference type="Proteomes" id="UP000233020">
    <property type="component" value="Whole Genome Shotgun Assembly"/>
</dbReference>
<dbReference type="GO" id="GO:0005737">
    <property type="term" value="C:cytoplasm"/>
    <property type="evidence" value="ECO:0000250"/>
    <property type="project" value="UniProtKB"/>
</dbReference>
<dbReference type="GO" id="GO:0005634">
    <property type="term" value="C:nucleus"/>
    <property type="evidence" value="ECO:0000250"/>
    <property type="project" value="UniProtKB"/>
</dbReference>
<dbReference type="GO" id="GO:0005524">
    <property type="term" value="F:ATP binding"/>
    <property type="evidence" value="ECO:0007669"/>
    <property type="project" value="UniProtKB-KW"/>
</dbReference>
<dbReference type="GO" id="GO:0046872">
    <property type="term" value="F:metal ion binding"/>
    <property type="evidence" value="ECO:0007669"/>
    <property type="project" value="UniProtKB-KW"/>
</dbReference>
<dbReference type="GO" id="GO:0106310">
    <property type="term" value="F:protein serine kinase activity"/>
    <property type="evidence" value="ECO:0007669"/>
    <property type="project" value="RHEA"/>
</dbReference>
<dbReference type="GO" id="GO:0004674">
    <property type="term" value="F:protein serine/threonine kinase activity"/>
    <property type="evidence" value="ECO:0000250"/>
    <property type="project" value="UniProtKB"/>
</dbReference>
<dbReference type="GO" id="GO:0006915">
    <property type="term" value="P:apoptotic process"/>
    <property type="evidence" value="ECO:0000250"/>
    <property type="project" value="UniProtKB"/>
</dbReference>
<dbReference type="GO" id="GO:0035556">
    <property type="term" value="P:intracellular signal transduction"/>
    <property type="evidence" value="ECO:0007669"/>
    <property type="project" value="UniProtKB-ARBA"/>
</dbReference>
<dbReference type="GO" id="GO:0051262">
    <property type="term" value="P:protein tetramerization"/>
    <property type="evidence" value="ECO:0007669"/>
    <property type="project" value="InterPro"/>
</dbReference>
<dbReference type="CDD" id="cd21887">
    <property type="entry name" value="SARAH_MST1"/>
    <property type="match status" value="1"/>
</dbReference>
<dbReference type="CDD" id="cd06612">
    <property type="entry name" value="STKc_MST1_2"/>
    <property type="match status" value="1"/>
</dbReference>
<dbReference type="FunFam" id="1.10.510.10:FF:000075">
    <property type="entry name" value="Serine/threonine-protein kinase 3"/>
    <property type="match status" value="1"/>
</dbReference>
<dbReference type="FunFam" id="3.30.200.20:FF:000410">
    <property type="entry name" value="Serine/threonine-protein kinase 3"/>
    <property type="match status" value="1"/>
</dbReference>
<dbReference type="FunFam" id="4.10.170.10:FF:000002">
    <property type="entry name" value="serine/threonine-protein kinase 3"/>
    <property type="match status" value="1"/>
</dbReference>
<dbReference type="FunFam" id="1.10.287.4270:FF:000004">
    <property type="entry name" value="Serine/threonine-protein kinase 3/4"/>
    <property type="match status" value="1"/>
</dbReference>
<dbReference type="FunFam" id="1.10.287.4270:FF:000002">
    <property type="entry name" value="Serine/threonine-protein kinase 4"/>
    <property type="match status" value="1"/>
</dbReference>
<dbReference type="Gene3D" id="1.10.287.4270">
    <property type="match status" value="1"/>
</dbReference>
<dbReference type="Gene3D" id="4.10.170.10">
    <property type="entry name" value="p53-like tetramerisation domain"/>
    <property type="match status" value="1"/>
</dbReference>
<dbReference type="Gene3D" id="1.10.510.10">
    <property type="entry name" value="Transferase(Phosphotransferase) domain 1"/>
    <property type="match status" value="1"/>
</dbReference>
<dbReference type="InterPro" id="IPR011009">
    <property type="entry name" value="Kinase-like_dom_sf"/>
</dbReference>
<dbReference type="InterPro" id="IPR024205">
    <property type="entry name" value="Mst1_2_SARAH_domain"/>
</dbReference>
<dbReference type="InterPro" id="IPR036674">
    <property type="entry name" value="p53_tetramer_sf"/>
</dbReference>
<dbReference type="InterPro" id="IPR000719">
    <property type="entry name" value="Prot_kinase_dom"/>
</dbReference>
<dbReference type="InterPro" id="IPR017441">
    <property type="entry name" value="Protein_kinase_ATP_BS"/>
</dbReference>
<dbReference type="InterPro" id="IPR011524">
    <property type="entry name" value="SARAH_dom"/>
</dbReference>
<dbReference type="InterPro" id="IPR050629">
    <property type="entry name" value="STE20/SPS1-PAK"/>
</dbReference>
<dbReference type="PANTHER" id="PTHR48012:SF2">
    <property type="entry name" value="STERILE20-LIKE KINASE, ISOFORM B"/>
    <property type="match status" value="1"/>
</dbReference>
<dbReference type="PANTHER" id="PTHR48012">
    <property type="entry name" value="STERILE20-LIKE KINASE, ISOFORM B-RELATED"/>
    <property type="match status" value="1"/>
</dbReference>
<dbReference type="Pfam" id="PF11629">
    <property type="entry name" value="Mst1_SARAH"/>
    <property type="match status" value="1"/>
</dbReference>
<dbReference type="Pfam" id="PF00069">
    <property type="entry name" value="Pkinase"/>
    <property type="match status" value="1"/>
</dbReference>
<dbReference type="SMART" id="SM00220">
    <property type="entry name" value="S_TKc"/>
    <property type="match status" value="1"/>
</dbReference>
<dbReference type="SUPFAM" id="SSF56112">
    <property type="entry name" value="Protein kinase-like (PK-like)"/>
    <property type="match status" value="1"/>
</dbReference>
<dbReference type="PROSITE" id="PS00107">
    <property type="entry name" value="PROTEIN_KINASE_ATP"/>
    <property type="match status" value="1"/>
</dbReference>
<dbReference type="PROSITE" id="PS50011">
    <property type="entry name" value="PROTEIN_KINASE_DOM"/>
    <property type="match status" value="1"/>
</dbReference>
<dbReference type="PROSITE" id="PS50951">
    <property type="entry name" value="SARAH"/>
    <property type="match status" value="1"/>
</dbReference>
<evidence type="ECO:0000250" key="1"/>
<evidence type="ECO:0000250" key="2">
    <source>
        <dbReference type="UniProtKB" id="Q13043"/>
    </source>
</evidence>
<evidence type="ECO:0000250" key="3">
    <source>
        <dbReference type="UniProtKB" id="Q9JI11"/>
    </source>
</evidence>
<evidence type="ECO:0000255" key="4"/>
<evidence type="ECO:0000255" key="5">
    <source>
        <dbReference type="PROSITE-ProRule" id="PRU00159"/>
    </source>
</evidence>
<evidence type="ECO:0000255" key="6">
    <source>
        <dbReference type="PROSITE-ProRule" id="PRU00310"/>
    </source>
</evidence>
<evidence type="ECO:0000256" key="7">
    <source>
        <dbReference type="SAM" id="MobiDB-lite"/>
    </source>
</evidence>
<evidence type="ECO:0000305" key="8"/>
<comment type="function">
    <text evidence="2 3">Stress-activated, pro-apoptotic kinase which, following caspase-cleavage, enters the nucleus and induces chromatin condensation followed by internucleosomal DNA fragmentation. Key component of the Hippo signaling pathway which plays a pivotal role in organ size control and tumor suppression by restricting proliferation and promoting apoptosis. The core of this pathway is composed of a kinase cascade wherein STK3/MST2 and STK4/MST1, in complex with its regulatory protein SAV1, phosphorylates and activates LATS1/2 in complex with its regulatory protein MOB1, which in turn phosphorylates and inactivates YAP1 oncoprotein and WWTR1/TAZ. Phosphorylation of YAP1 by LATS2 inhibits its translocation into the nucleus to regulate cellular genes important for cell proliferation, cell death, and cell migration. STK3/MST2 and STK4/MST1 are required to repress proliferation of mature hepatocytes, to prevent activation of facultative adult liver stem cells (oval cells), and to inhibit tumor formation. Phosphorylates 'Ser-14' of histone H2B (H2BS14ph) during apoptosis. Phosphorylates FOXO3 upon oxidative stress, which results in its nuclear translocation and cell death initiation. Phosphorylates MOBKL1A, MOBKL1B and RASSF2. Phosphorylates TNNI3 (cardiac Tn-I) and alters its binding affinity to TNNC1 (cardiac Tn-C) and TNNT2 (cardiac Tn-T). Phosphorylates FOXO1 on 'Ser-212' and regulates its activation and stimulates transcription of PMAIP1 in a FOXO1-dependent manner. Phosphorylates SIRT1 and inhibits SIRT1-mediated p53/TP53 deacetylation, thereby promoting p53/TP53 dependent transcription and apoptosis upon DNA damage. Acts as an inhibitor of PKB/AKT1. Phosphorylates AR on 'Ser-650' and suppresses its activity by intersecting with PKB/AKT1 signaling and antagonizing formation of AR-chromatin complexes.</text>
</comment>
<comment type="catalytic activity">
    <reaction evidence="2">
        <text>L-seryl-[protein] + ATP = O-phospho-L-seryl-[protein] + ADP + H(+)</text>
        <dbReference type="Rhea" id="RHEA:17989"/>
        <dbReference type="Rhea" id="RHEA-COMP:9863"/>
        <dbReference type="Rhea" id="RHEA-COMP:11604"/>
        <dbReference type="ChEBI" id="CHEBI:15378"/>
        <dbReference type="ChEBI" id="CHEBI:29999"/>
        <dbReference type="ChEBI" id="CHEBI:30616"/>
        <dbReference type="ChEBI" id="CHEBI:83421"/>
        <dbReference type="ChEBI" id="CHEBI:456216"/>
        <dbReference type="EC" id="2.7.11.1"/>
    </reaction>
    <physiologicalReaction direction="left-to-right" evidence="2">
        <dbReference type="Rhea" id="RHEA:17990"/>
    </physiologicalReaction>
</comment>
<comment type="catalytic activity">
    <reaction evidence="2">
        <text>L-threonyl-[protein] + ATP = O-phospho-L-threonyl-[protein] + ADP + H(+)</text>
        <dbReference type="Rhea" id="RHEA:46608"/>
        <dbReference type="Rhea" id="RHEA-COMP:11060"/>
        <dbReference type="Rhea" id="RHEA-COMP:11605"/>
        <dbReference type="ChEBI" id="CHEBI:15378"/>
        <dbReference type="ChEBI" id="CHEBI:30013"/>
        <dbReference type="ChEBI" id="CHEBI:30616"/>
        <dbReference type="ChEBI" id="CHEBI:61977"/>
        <dbReference type="ChEBI" id="CHEBI:456216"/>
        <dbReference type="EC" id="2.7.11.1"/>
    </reaction>
    <physiologicalReaction direction="left-to-right" evidence="2">
        <dbReference type="Rhea" id="RHEA:46609"/>
    </physiologicalReaction>
</comment>
<comment type="cofactor">
    <cofactor evidence="1">
        <name>Mg(2+)</name>
        <dbReference type="ChEBI" id="CHEBI:18420"/>
    </cofactor>
</comment>
<comment type="activity regulation">
    <text evidence="1">Inhibited by the C-terminal non-catalytic region. Activated by caspase-cleavage. Full activation also requires homodimerization and autophosphorylation of Thr-183. Activated by RASSF1 which acts by preventing its dephosphorylation (By similarity).</text>
</comment>
<comment type="subunit">
    <text evidence="2">Homodimer; mediated via the coiled-coil region. Interacts with NORE1, which inhibits autoactivation. Interacts with and stabilizes SAV1. Interacts with RASSF1. Interacts with FOXO3. Interacts with RASSF2 (via SARAH domain). Interacts with AR, PKB/AKT1, TNNI3 and SIRT1. Interacts with DLG5 (via PDZ domain 3). Interacts with MARK3 and SCRIB in the presence of DLG5.</text>
</comment>
<comment type="subcellular location">
    <subcellularLocation>
        <location evidence="1">Cytoplasm</location>
    </subcellularLocation>
    <subcellularLocation>
        <location evidence="1">Nucleus</location>
    </subcellularLocation>
    <text evidence="1">The caspase-cleaved form cycles between the nucleus and cytoplasm.</text>
</comment>
<comment type="PTM">
    <text evidence="2">Autophosphorylated on serine and threonine residues. Phosphorylation at Thr-387 by PKB/AKT1, leads to inhibition of its: kinase activity, nuclear translocation and autophosphorylation at Thr-183. It also diminishes its cleavage by caspases and its ability to phosphorylate FOXO3 (By similarity).</text>
</comment>
<comment type="PTM">
    <text evidence="1">Proteolytically cleaved by caspase-3 during apoptosis at Asp-326 and Asp-349 resulting in a 37 kDa or a 39 kDa subunit respectively. The 39 kDa subunit is further cleaved into the 37 kDa form. Proteolytic cleavage results in kinase activation and nuclear translocation of the truncated form (MST1/N). It is less likely that cleavage at Asp-349 is a prerequisite for activation as this site is not conserved in the murine ortholog (By similarity).</text>
</comment>
<comment type="similarity">
    <text evidence="8">Belongs to the protein kinase superfamily. STE Ser/Thr protein kinase family. STE20 subfamily.</text>
</comment>
<sequence>METVQLRNPPRRQLKKLDEDSLTKQPEEVFDVLEKLGEGSYGSVYKAIHKETGQIVAIKQVPVESDLQEIIKEISIMQQCDSHHVVKYYGSYFKNTDLWIVMEYCGAGSVSDIIRLRNKTLTEDEIATILQSTLKGLEYLHFMRKIHRDIKAGNILLNTEGHAKLADFGVAGQLTDTMAKRNTVIGTPFWMAPEVIQEIGYNCVADIWSLGITAIEMAEGKPPYADIHPMRAIFMIPTNPPPTFRKPELWSDNFTDFVKQCLVKSPEQRATATQLLQHPFVKSAKGVSILRDLINEAMDVKLKRQESQQREVDQDDEENSEEDEMDSGTMVRAVGDEMGTVRVASTMTDGANTMIEHDDTLPSQLGTMVINAEDEEEEGTMKRRDETMQPAKPSFLEYFEQKEKENQINSFGKSIPGPLQNSSDWKVPQDGDYEFLKSWTVEDLQKRLLALDPMMEQEIEEIRQKYQSKRQPILDAIEAKKRRQQNF</sequence>
<keyword id="KW-0007">Acetylation</keyword>
<keyword id="KW-0053">Apoptosis</keyword>
<keyword id="KW-0067">ATP-binding</keyword>
<keyword id="KW-0175">Coiled coil</keyword>
<keyword id="KW-0963">Cytoplasm</keyword>
<keyword id="KW-0418">Kinase</keyword>
<keyword id="KW-0460">Magnesium</keyword>
<keyword id="KW-0479">Metal-binding</keyword>
<keyword id="KW-0547">Nucleotide-binding</keyword>
<keyword id="KW-0539">Nucleus</keyword>
<keyword id="KW-0597">Phosphoprotein</keyword>
<keyword id="KW-1185">Reference proteome</keyword>
<keyword id="KW-0723">Serine/threonine-protein kinase</keyword>
<keyword id="KW-0808">Transferase</keyword>
<name>STK4_AOTNA</name>
<proteinExistence type="inferred from homology"/>
<reference key="1">
    <citation type="journal article" date="2007" name="Genome Res.">
        <title>Comparative sequence analyses reveal rapid and divergent evolutionary changes of the WFDC locus in the primate lineage.</title>
        <authorList>
            <consortium name="NISC comparative sequencing program"/>
            <person name="Hurle B."/>
            <person name="Swanson W."/>
            <person name="Green E.D."/>
        </authorList>
    </citation>
    <scope>NUCLEOTIDE SEQUENCE [GENOMIC DNA]</scope>
</reference>
<gene>
    <name type="primary">STK4</name>
</gene>